<reference key="1">
    <citation type="journal article" date="2008" name="PLoS Genet.">
        <title>Complete genome sequence of the complex carbohydrate-degrading marine bacterium, Saccharophagus degradans strain 2-40 T.</title>
        <authorList>
            <person name="Weiner R.M."/>
            <person name="Taylor L.E. II"/>
            <person name="Henrissat B."/>
            <person name="Hauser L."/>
            <person name="Land M."/>
            <person name="Coutinho P.M."/>
            <person name="Rancurel C."/>
            <person name="Saunders E.H."/>
            <person name="Longmire A.G."/>
            <person name="Zhang H."/>
            <person name="Bayer E.A."/>
            <person name="Gilbert H.J."/>
            <person name="Larimer F."/>
            <person name="Zhulin I.B."/>
            <person name="Ekborg N.A."/>
            <person name="Lamed R."/>
            <person name="Richardson P.M."/>
            <person name="Borovok I."/>
            <person name="Hutcheson S."/>
        </authorList>
    </citation>
    <scope>NUCLEOTIDE SEQUENCE [LARGE SCALE GENOMIC DNA]</scope>
    <source>
        <strain>2-40 / ATCC 43961 / DSM 17024</strain>
    </source>
</reference>
<accession>Q21IX1</accession>
<protein>
    <recommendedName>
        <fullName evidence="1">Glycerol-3-phosphate dehydrogenase [NAD(P)+]</fullName>
        <ecNumber evidence="1">1.1.1.94</ecNumber>
    </recommendedName>
    <alternativeName>
        <fullName evidence="1">NAD(P)(+)-dependent glycerol-3-phosphate dehydrogenase</fullName>
    </alternativeName>
    <alternativeName>
        <fullName evidence="1">NAD(P)H-dependent dihydroxyacetone-phosphate reductase</fullName>
    </alternativeName>
</protein>
<keyword id="KW-0963">Cytoplasm</keyword>
<keyword id="KW-0444">Lipid biosynthesis</keyword>
<keyword id="KW-0443">Lipid metabolism</keyword>
<keyword id="KW-0520">NAD</keyword>
<keyword id="KW-0521">NADP</keyword>
<keyword id="KW-0547">Nucleotide-binding</keyword>
<keyword id="KW-0560">Oxidoreductase</keyword>
<keyword id="KW-0594">Phospholipid biosynthesis</keyword>
<keyword id="KW-1208">Phospholipid metabolism</keyword>
<keyword id="KW-1185">Reference proteome</keyword>
<comment type="function">
    <text evidence="1">Catalyzes the reduction of the glycolytic intermediate dihydroxyacetone phosphate (DHAP) to sn-glycerol 3-phosphate (G3P), the key precursor for phospholipid synthesis.</text>
</comment>
<comment type="catalytic activity">
    <reaction evidence="1">
        <text>sn-glycerol 3-phosphate + NAD(+) = dihydroxyacetone phosphate + NADH + H(+)</text>
        <dbReference type="Rhea" id="RHEA:11092"/>
        <dbReference type="ChEBI" id="CHEBI:15378"/>
        <dbReference type="ChEBI" id="CHEBI:57540"/>
        <dbReference type="ChEBI" id="CHEBI:57597"/>
        <dbReference type="ChEBI" id="CHEBI:57642"/>
        <dbReference type="ChEBI" id="CHEBI:57945"/>
        <dbReference type="EC" id="1.1.1.94"/>
    </reaction>
    <physiologicalReaction direction="right-to-left" evidence="1">
        <dbReference type="Rhea" id="RHEA:11094"/>
    </physiologicalReaction>
</comment>
<comment type="catalytic activity">
    <reaction evidence="1">
        <text>sn-glycerol 3-phosphate + NADP(+) = dihydroxyacetone phosphate + NADPH + H(+)</text>
        <dbReference type="Rhea" id="RHEA:11096"/>
        <dbReference type="ChEBI" id="CHEBI:15378"/>
        <dbReference type="ChEBI" id="CHEBI:57597"/>
        <dbReference type="ChEBI" id="CHEBI:57642"/>
        <dbReference type="ChEBI" id="CHEBI:57783"/>
        <dbReference type="ChEBI" id="CHEBI:58349"/>
        <dbReference type="EC" id="1.1.1.94"/>
    </reaction>
    <physiologicalReaction direction="right-to-left" evidence="1">
        <dbReference type="Rhea" id="RHEA:11098"/>
    </physiologicalReaction>
</comment>
<comment type="pathway">
    <text evidence="1">Membrane lipid metabolism; glycerophospholipid metabolism.</text>
</comment>
<comment type="subcellular location">
    <subcellularLocation>
        <location evidence="1">Cytoplasm</location>
    </subcellularLocation>
</comment>
<comment type="similarity">
    <text evidence="1">Belongs to the NAD-dependent glycerol-3-phosphate dehydrogenase family.</text>
</comment>
<name>GPDA_SACD2</name>
<feature type="chain" id="PRO_0000255363" description="Glycerol-3-phosphate dehydrogenase [NAD(P)+]">
    <location>
        <begin position="1"/>
        <end position="358"/>
    </location>
</feature>
<feature type="active site" description="Proton acceptor" evidence="1">
    <location>
        <position position="211"/>
    </location>
</feature>
<feature type="binding site" evidence="1">
    <location>
        <position position="33"/>
    </location>
    <ligand>
        <name>NADPH</name>
        <dbReference type="ChEBI" id="CHEBI:57783"/>
    </ligand>
</feature>
<feature type="binding site" evidence="1">
    <location>
        <position position="34"/>
    </location>
    <ligand>
        <name>NADPH</name>
        <dbReference type="ChEBI" id="CHEBI:57783"/>
    </ligand>
</feature>
<feature type="binding site" evidence="1">
    <location>
        <position position="54"/>
    </location>
    <ligand>
        <name>NADPH</name>
        <dbReference type="ChEBI" id="CHEBI:57783"/>
    </ligand>
</feature>
<feature type="binding site" evidence="1">
    <location>
        <position position="128"/>
    </location>
    <ligand>
        <name>NADPH</name>
        <dbReference type="ChEBI" id="CHEBI:57783"/>
    </ligand>
</feature>
<feature type="binding site" evidence="1">
    <location>
        <position position="128"/>
    </location>
    <ligand>
        <name>sn-glycerol 3-phosphate</name>
        <dbReference type="ChEBI" id="CHEBI:57597"/>
    </ligand>
</feature>
<feature type="binding site" evidence="1">
    <location>
        <position position="156"/>
    </location>
    <ligand>
        <name>sn-glycerol 3-phosphate</name>
        <dbReference type="ChEBI" id="CHEBI:57597"/>
    </ligand>
</feature>
<feature type="binding site" evidence="1">
    <location>
        <position position="160"/>
    </location>
    <ligand>
        <name>NADPH</name>
        <dbReference type="ChEBI" id="CHEBI:57783"/>
    </ligand>
</feature>
<feature type="binding site" evidence="1">
    <location>
        <position position="211"/>
    </location>
    <ligand>
        <name>sn-glycerol 3-phosphate</name>
        <dbReference type="ChEBI" id="CHEBI:57597"/>
    </ligand>
</feature>
<feature type="binding site" evidence="1">
    <location>
        <position position="264"/>
    </location>
    <ligand>
        <name>sn-glycerol 3-phosphate</name>
        <dbReference type="ChEBI" id="CHEBI:57597"/>
    </ligand>
</feature>
<feature type="binding site" evidence="1">
    <location>
        <position position="274"/>
    </location>
    <ligand>
        <name>sn-glycerol 3-phosphate</name>
        <dbReference type="ChEBI" id="CHEBI:57597"/>
    </ligand>
</feature>
<feature type="binding site" evidence="1">
    <location>
        <position position="275"/>
    </location>
    <ligand>
        <name>NADPH</name>
        <dbReference type="ChEBI" id="CHEBI:57783"/>
    </ligand>
</feature>
<feature type="binding site" evidence="1">
    <location>
        <position position="275"/>
    </location>
    <ligand>
        <name>sn-glycerol 3-phosphate</name>
        <dbReference type="ChEBI" id="CHEBI:57597"/>
    </ligand>
</feature>
<feature type="binding site" evidence="1">
    <location>
        <position position="276"/>
    </location>
    <ligand>
        <name>sn-glycerol 3-phosphate</name>
        <dbReference type="ChEBI" id="CHEBI:57597"/>
    </ligand>
</feature>
<feature type="binding site" evidence="1">
    <location>
        <position position="299"/>
    </location>
    <ligand>
        <name>NADPH</name>
        <dbReference type="ChEBI" id="CHEBI:57783"/>
    </ligand>
</feature>
<feature type="binding site" evidence="1">
    <location>
        <position position="301"/>
    </location>
    <ligand>
        <name>NADPH</name>
        <dbReference type="ChEBI" id="CHEBI:57783"/>
    </ligand>
</feature>
<sequence>MLQLLVEFFSLTENQAYNNMSSKYTVTVLGGGSFGTAVANIIATNGHVSRLWMRDAARAERCQASRENTEYLPGYPLHDNLVATTDLIGSVSTSDIVVISVPSQSFREVAKLAAPHLRKDTIVISTTKGIDADGFFLMSQILEQELTDVRIGVLSGPNFAKEIVQNQYTGSVVASEHDEVLKCVQQVFSSNTFRIYSNPDRYGVELGGALKNIYAMVTGMAAALGCGHNTMAMLLTRSLAEMGRFARELGADSMTFLGLAGMGDLVLTCTSDLSRNYRVGFAVGRGKSLEQAVQEIGQVAEGVNTLRIVKKKAEELNVYMPLVDGLHAVLFDKQDLQQVIQGLMTGEMSSDVDLQGGL</sequence>
<dbReference type="EC" id="1.1.1.94" evidence="1"/>
<dbReference type="EMBL" id="CP000282">
    <property type="protein sequence ID" value="ABD81358.1"/>
    <property type="molecule type" value="Genomic_DNA"/>
</dbReference>
<dbReference type="SMR" id="Q21IX1"/>
<dbReference type="STRING" id="203122.Sde_2098"/>
<dbReference type="KEGG" id="sde:Sde_2098"/>
<dbReference type="eggNOG" id="COG0240">
    <property type="taxonomic scope" value="Bacteria"/>
</dbReference>
<dbReference type="HOGENOM" id="CLU_033449_0_2_6"/>
<dbReference type="UniPathway" id="UPA00940"/>
<dbReference type="Proteomes" id="UP000001947">
    <property type="component" value="Chromosome"/>
</dbReference>
<dbReference type="GO" id="GO:0005829">
    <property type="term" value="C:cytosol"/>
    <property type="evidence" value="ECO:0007669"/>
    <property type="project" value="TreeGrafter"/>
</dbReference>
<dbReference type="GO" id="GO:0047952">
    <property type="term" value="F:glycerol-3-phosphate dehydrogenase [NAD(P)+] activity"/>
    <property type="evidence" value="ECO:0007669"/>
    <property type="project" value="UniProtKB-UniRule"/>
</dbReference>
<dbReference type="GO" id="GO:0051287">
    <property type="term" value="F:NAD binding"/>
    <property type="evidence" value="ECO:0007669"/>
    <property type="project" value="InterPro"/>
</dbReference>
<dbReference type="GO" id="GO:0005975">
    <property type="term" value="P:carbohydrate metabolic process"/>
    <property type="evidence" value="ECO:0007669"/>
    <property type="project" value="InterPro"/>
</dbReference>
<dbReference type="GO" id="GO:0046167">
    <property type="term" value="P:glycerol-3-phosphate biosynthetic process"/>
    <property type="evidence" value="ECO:0007669"/>
    <property type="project" value="UniProtKB-UniRule"/>
</dbReference>
<dbReference type="GO" id="GO:0046168">
    <property type="term" value="P:glycerol-3-phosphate catabolic process"/>
    <property type="evidence" value="ECO:0007669"/>
    <property type="project" value="InterPro"/>
</dbReference>
<dbReference type="GO" id="GO:0046474">
    <property type="term" value="P:glycerophospholipid biosynthetic process"/>
    <property type="evidence" value="ECO:0007669"/>
    <property type="project" value="TreeGrafter"/>
</dbReference>
<dbReference type="FunFam" id="1.10.1040.10:FF:000001">
    <property type="entry name" value="Glycerol-3-phosphate dehydrogenase [NAD(P)+]"/>
    <property type="match status" value="1"/>
</dbReference>
<dbReference type="FunFam" id="3.40.50.720:FF:000019">
    <property type="entry name" value="Glycerol-3-phosphate dehydrogenase [NAD(P)+]"/>
    <property type="match status" value="1"/>
</dbReference>
<dbReference type="Gene3D" id="1.10.1040.10">
    <property type="entry name" value="N-(1-d-carboxylethyl)-l-norvaline Dehydrogenase, domain 2"/>
    <property type="match status" value="1"/>
</dbReference>
<dbReference type="Gene3D" id="3.40.50.720">
    <property type="entry name" value="NAD(P)-binding Rossmann-like Domain"/>
    <property type="match status" value="1"/>
</dbReference>
<dbReference type="HAMAP" id="MF_00394">
    <property type="entry name" value="NAD_Glyc3P_dehydrog"/>
    <property type="match status" value="1"/>
</dbReference>
<dbReference type="InterPro" id="IPR008927">
    <property type="entry name" value="6-PGluconate_DH-like_C_sf"/>
</dbReference>
<dbReference type="InterPro" id="IPR013328">
    <property type="entry name" value="6PGD_dom2"/>
</dbReference>
<dbReference type="InterPro" id="IPR006168">
    <property type="entry name" value="G3P_DH_NAD-dep"/>
</dbReference>
<dbReference type="InterPro" id="IPR006109">
    <property type="entry name" value="G3P_DH_NAD-dep_C"/>
</dbReference>
<dbReference type="InterPro" id="IPR011128">
    <property type="entry name" value="G3P_DH_NAD-dep_N"/>
</dbReference>
<dbReference type="InterPro" id="IPR036291">
    <property type="entry name" value="NAD(P)-bd_dom_sf"/>
</dbReference>
<dbReference type="NCBIfam" id="NF000940">
    <property type="entry name" value="PRK00094.1-2"/>
    <property type="match status" value="1"/>
</dbReference>
<dbReference type="NCBIfam" id="NF000942">
    <property type="entry name" value="PRK00094.1-4"/>
    <property type="match status" value="1"/>
</dbReference>
<dbReference type="NCBIfam" id="NF000946">
    <property type="entry name" value="PRK00094.2-4"/>
    <property type="match status" value="1"/>
</dbReference>
<dbReference type="PANTHER" id="PTHR11728">
    <property type="entry name" value="GLYCEROL-3-PHOSPHATE DEHYDROGENASE"/>
    <property type="match status" value="1"/>
</dbReference>
<dbReference type="PANTHER" id="PTHR11728:SF1">
    <property type="entry name" value="GLYCEROL-3-PHOSPHATE DEHYDROGENASE [NAD(+)] 2, CHLOROPLASTIC"/>
    <property type="match status" value="1"/>
</dbReference>
<dbReference type="Pfam" id="PF07479">
    <property type="entry name" value="NAD_Gly3P_dh_C"/>
    <property type="match status" value="1"/>
</dbReference>
<dbReference type="Pfam" id="PF01210">
    <property type="entry name" value="NAD_Gly3P_dh_N"/>
    <property type="match status" value="1"/>
</dbReference>
<dbReference type="PIRSF" id="PIRSF000114">
    <property type="entry name" value="Glycerol-3-P_dh"/>
    <property type="match status" value="1"/>
</dbReference>
<dbReference type="PRINTS" id="PR00077">
    <property type="entry name" value="GPDHDRGNASE"/>
</dbReference>
<dbReference type="SUPFAM" id="SSF48179">
    <property type="entry name" value="6-phosphogluconate dehydrogenase C-terminal domain-like"/>
    <property type="match status" value="1"/>
</dbReference>
<dbReference type="SUPFAM" id="SSF51735">
    <property type="entry name" value="NAD(P)-binding Rossmann-fold domains"/>
    <property type="match status" value="1"/>
</dbReference>
<evidence type="ECO:0000255" key="1">
    <source>
        <dbReference type="HAMAP-Rule" id="MF_00394"/>
    </source>
</evidence>
<gene>
    <name evidence="1" type="primary">gpsA</name>
    <name type="ordered locus">Sde_2098</name>
</gene>
<proteinExistence type="inferred from homology"/>
<organism>
    <name type="scientific">Saccharophagus degradans (strain 2-40 / ATCC 43961 / DSM 17024)</name>
    <dbReference type="NCBI Taxonomy" id="203122"/>
    <lineage>
        <taxon>Bacteria</taxon>
        <taxon>Pseudomonadati</taxon>
        <taxon>Pseudomonadota</taxon>
        <taxon>Gammaproteobacteria</taxon>
        <taxon>Cellvibrionales</taxon>
        <taxon>Cellvibrionaceae</taxon>
        <taxon>Saccharophagus</taxon>
    </lineage>
</organism>